<dbReference type="EMBL" id="U00096">
    <property type="protein sequence ID" value="AYC08173.1"/>
    <property type="molecule type" value="Genomic_DNA"/>
</dbReference>
<dbReference type="RefSeq" id="WP_001272156.1">
    <property type="nucleotide sequence ID" value="NZ_LN832404.1"/>
</dbReference>
<dbReference type="SMR" id="P0DPM9"/>
<dbReference type="EnsemblBacteria" id="AYC08173">
    <property type="protein sequence ID" value="AYC08173"/>
    <property type="gene ID" value="b4729"/>
</dbReference>
<dbReference type="KEGG" id="ecoc:C3026_01355"/>
<dbReference type="KEGG" id="ecoc:C3026_23990"/>
<dbReference type="InParanoid" id="P0DPM9"/>
<dbReference type="OrthoDB" id="6615103at2"/>
<dbReference type="BioCyc" id="EcoCyc:MONOMER0-4406"/>
<dbReference type="PRO" id="PR:P0DPM9"/>
<dbReference type="Proteomes" id="UP000000625">
    <property type="component" value="Chromosome"/>
</dbReference>
<dbReference type="InterPro" id="IPR009061">
    <property type="entry name" value="DNA-bd_dom_put_sf"/>
</dbReference>
<dbReference type="InterPro" id="IPR018247">
    <property type="entry name" value="EF_Hand_1_Ca_BS"/>
</dbReference>
<dbReference type="InterPro" id="IPR041657">
    <property type="entry name" value="HTH_17"/>
</dbReference>
<dbReference type="Pfam" id="PF12728">
    <property type="entry name" value="HTH_17"/>
    <property type="match status" value="1"/>
</dbReference>
<dbReference type="SUPFAM" id="SSF46955">
    <property type="entry name" value="Putative DNA-binding domain"/>
    <property type="match status" value="1"/>
</dbReference>
<dbReference type="PROSITE" id="PS00018">
    <property type="entry name" value="EF_HAND_1"/>
    <property type="match status" value="1"/>
</dbReference>
<reference key="1">
    <citation type="journal article" date="1997" name="Science">
        <title>The complete genome sequence of Escherichia coli K-12.</title>
        <authorList>
            <person name="Blattner F.R."/>
            <person name="Plunkett G. III"/>
            <person name="Bloch C.A."/>
            <person name="Perna N.T."/>
            <person name="Burland V."/>
            <person name="Riley M."/>
            <person name="Collado-Vides J."/>
            <person name="Glasner J.D."/>
            <person name="Rode C.K."/>
            <person name="Mayhew G.F."/>
            <person name="Gregor J."/>
            <person name="Davis N.W."/>
            <person name="Kirkpatrick H.A."/>
            <person name="Goeden M.A."/>
            <person name="Rose D.J."/>
            <person name="Mau B."/>
            <person name="Shao Y."/>
        </authorList>
    </citation>
    <scope>NUCLEOTIDE SEQUENCE [LARGE SCALE GENOMIC DNA]</scope>
    <source>
        <strain>K12 / MG1655 / ATCC 47076</strain>
    </source>
</reference>
<reference key="2">
    <citation type="journal article" date="2018" name="Proteomics">
        <title>Identifying new small proteins in Escherichia coli.</title>
        <authorList>
            <person name="VanOrsdel C.E."/>
            <person name="Kelly J.P."/>
            <person name="Burke B.N."/>
            <person name="Lein C.D."/>
            <person name="Oufiero C.E."/>
            <person name="Sanchez J.F."/>
            <person name="Wimmers L.E."/>
            <person name="Hearn D.J."/>
            <person name="Abuikhdair F.J."/>
            <person name="Barnhart K.R."/>
            <person name="Duley M.L."/>
            <person name="Ernst S.E.G."/>
            <person name="Kenerson B.A."/>
            <person name="Serafin A.J."/>
            <person name="Hemm M.R."/>
        </authorList>
    </citation>
    <scope>IDENTIFICATION</scope>
    <scope>INDUCTION</scope>
</reference>
<feature type="chain" id="PRO_0000445157" description="Protein YkgV">
    <location>
        <begin position="1"/>
        <end position="74"/>
    </location>
</feature>
<organism>
    <name type="scientific">Escherichia coli (strain K12)</name>
    <dbReference type="NCBI Taxonomy" id="83333"/>
    <lineage>
        <taxon>Bacteria</taxon>
        <taxon>Pseudomonadati</taxon>
        <taxon>Pseudomonadota</taxon>
        <taxon>Gammaproteobacteria</taxon>
        <taxon>Enterobacterales</taxon>
        <taxon>Enterobacteriaceae</taxon>
        <taxon>Escherichia</taxon>
    </lineage>
</organism>
<name>YKGV_ECOLI</name>
<sequence length="74" mass="8638">MSAFKLPDTSQSQLISTAELAKIISYKSQTIRKWLCQDKLPEGLPRPKQINGRHYWLRKDVLDFIDTFSVRESL</sequence>
<proteinExistence type="evidence at protein level"/>
<evidence type="ECO:0000269" key="1">
    <source>
    </source>
</evidence>
<evidence type="ECO:0000303" key="2">
    <source>
    </source>
</evidence>
<comment type="induction">
    <text evidence="1">Expressed at low, approximately equal levels in exponential and stationary phases (at protein level).</text>
</comment>
<keyword id="KW-1185">Reference proteome</keyword>
<protein>
    <recommendedName>
        <fullName evidence="2">Protein YkgV</fullName>
    </recommendedName>
</protein>
<gene>
    <name evidence="2" type="primary">ykgV</name>
    <name type="ordered locus">b4729</name>
</gene>
<accession>P0DPM9</accession>
<accession>A0A385XJA7</accession>